<organismHost>
    <name type="scientific">Homo sapiens</name>
    <name type="common">Human</name>
    <dbReference type="NCBI Taxonomy" id="9606"/>
</organismHost>
<protein>
    <recommendedName>
        <fullName evidence="1">Tripartite terminase subunit 2</fullName>
    </recommendedName>
</protein>
<proteinExistence type="evidence at protein level"/>
<gene>
    <name evidence="1" type="primary">TRM2</name>
    <name type="ordered locus">UL33</name>
</gene>
<accession>P10217</accession>
<name>TRM2_HHV11</name>
<keyword id="KW-0002">3D-structure</keyword>
<keyword id="KW-1048">Host nucleus</keyword>
<keyword id="KW-1185">Reference proteome</keyword>
<keyword id="KW-0231">Viral genome packaging</keyword>
<keyword id="KW-1188">Viral release from host cell</keyword>
<evidence type="ECO:0000255" key="1">
    <source>
        <dbReference type="HAMAP-Rule" id="MF_04015"/>
    </source>
</evidence>
<evidence type="ECO:0000269" key="2">
    <source>
    </source>
</evidence>
<evidence type="ECO:0000269" key="3">
    <source>
    </source>
</evidence>
<evidence type="ECO:0000269" key="4">
    <source>
    </source>
</evidence>
<evidence type="ECO:0000269" key="5">
    <source>
    </source>
</evidence>
<evidence type="ECO:0007829" key="6">
    <source>
        <dbReference type="PDB" id="6M5R"/>
    </source>
</evidence>
<dbReference type="EMBL" id="X14112">
    <property type="protein sequence ID" value="CAA32308.1"/>
    <property type="molecule type" value="Genomic_DNA"/>
</dbReference>
<dbReference type="EMBL" id="M62932">
    <property type="protein sequence ID" value="AAA45829.1"/>
    <property type="molecule type" value="Genomic_DNA"/>
</dbReference>
<dbReference type="PIR" id="F30085">
    <property type="entry name" value="WMBEH3"/>
</dbReference>
<dbReference type="PDB" id="6M5R">
    <property type="method" value="EM"/>
    <property type="resolution" value="3.50 A"/>
    <property type="chains" value="C=12-129"/>
</dbReference>
<dbReference type="PDB" id="6M5S">
    <property type="method" value="EM"/>
    <property type="resolution" value="3.90 A"/>
    <property type="chains" value="C=12-129"/>
</dbReference>
<dbReference type="PDB" id="6M5U">
    <property type="method" value="EM"/>
    <property type="resolution" value="3.80 A"/>
    <property type="chains" value="C=12-129"/>
</dbReference>
<dbReference type="PDB" id="6M5V">
    <property type="method" value="EM"/>
    <property type="resolution" value="4.50 A"/>
    <property type="chains" value="C=13-129"/>
</dbReference>
<dbReference type="PDBsum" id="6M5R"/>
<dbReference type="PDBsum" id="6M5S"/>
<dbReference type="PDBsum" id="6M5U"/>
<dbReference type="PDBsum" id="6M5V"/>
<dbReference type="SMR" id="P10217"/>
<dbReference type="IntAct" id="P10217">
    <property type="interactions" value="2"/>
</dbReference>
<dbReference type="MINT" id="P10217"/>
<dbReference type="Proteomes" id="UP000009294">
    <property type="component" value="Segment"/>
</dbReference>
<dbReference type="GO" id="GO:0042025">
    <property type="term" value="C:host cell nucleus"/>
    <property type="evidence" value="ECO:0007669"/>
    <property type="project" value="UniProtKB-SubCell"/>
</dbReference>
<dbReference type="GO" id="GO:0019073">
    <property type="term" value="P:viral DNA genome packaging"/>
    <property type="evidence" value="ECO:0007669"/>
    <property type="project" value="InterPro"/>
</dbReference>
<dbReference type="HAMAP" id="MF_04015">
    <property type="entry name" value="HSV_TRM2"/>
    <property type="match status" value="1"/>
</dbReference>
<dbReference type="InterPro" id="IPR005208">
    <property type="entry name" value="Herpes_TT2"/>
</dbReference>
<dbReference type="Pfam" id="PF03581">
    <property type="entry name" value="Herpes_UL33"/>
    <property type="match status" value="1"/>
</dbReference>
<reference key="1">
    <citation type="journal article" date="1988" name="J. Gen. Virol.">
        <title>The complete DNA sequence of the long unique region in the genome of herpes simplex virus type 1.</title>
        <authorList>
            <person name="McGeoch D.J."/>
            <person name="Dalrymple M.A."/>
            <person name="Davison A.J."/>
            <person name="Dolan A."/>
            <person name="Frame M.C."/>
            <person name="McNab D."/>
            <person name="Perry L.J."/>
            <person name="Scott J.E."/>
            <person name="Taylor P."/>
        </authorList>
    </citation>
    <scope>NUCLEOTIDE SEQUENCE [GENOMIC DNA]</scope>
</reference>
<reference key="2">
    <citation type="journal article" date="1991" name="Virology">
        <title>The herpes simplex virus UL33 gene product is required for the assembly of full capsids.</title>
        <authorList>
            <person name="Al-Kobaisi M.F."/>
            <person name="Rixon F.J."/>
            <person name="McDougall I."/>
            <person name="Preston V.G."/>
        </authorList>
    </citation>
    <scope>NUCLEOTIDE SEQUENCE [GENOMIC DNA]</scope>
</reference>
<reference key="3">
    <citation type="journal article" date="2004" name="Virology">
        <title>The DNA cleavage and packaging protein encoded by the UL33 gene of herpes simplex virus 1 associates with capsids.</title>
        <authorList>
            <person name="Beard P.M."/>
            <person name="Baines J.D."/>
        </authorList>
    </citation>
    <scope>FUNCTION</scope>
</reference>
<reference key="4">
    <citation type="journal article" date="2007" name="J. Virol.">
        <title>Putative terminase subunits of herpes simplex virus 1 form a complex in the cytoplasm and interact with portal protein in the nucleus.</title>
        <authorList>
            <person name="Yang K."/>
            <person name="Homa F."/>
            <person name="Baines J.D."/>
        </authorList>
    </citation>
    <scope>INTERACTION WITH TRM1 AND TRM3</scope>
</reference>
<reference key="5">
    <citation type="journal article" date="2008" name="J. Virol.">
        <title>Temperature-sensitive mutations in the putative herpes simplex virus type 1 terminase subunits pUL15 and pUL33 preclude viral DNA cleavage/packaging and interaction with pUL28 at the nonpermissive temperature.</title>
        <authorList>
            <person name="Yang K."/>
            <person name="Poon A.P."/>
            <person name="Roizman B."/>
            <person name="Baines J.D."/>
        </authorList>
    </citation>
    <scope>FUNCTION</scope>
</reference>
<reference key="6">
    <citation type="journal article" date="2008" name="J. Gen. Virol.">
        <title>The UL15 protein of herpes simplex virus type 1 is necessary for the localization of the UL28 and UL33 proteins to viral DNA replication centres.</title>
        <authorList>
            <person name="Higgs M.R."/>
            <person name="Preston V.G."/>
            <person name="Stow N.D."/>
        </authorList>
    </citation>
    <scope>SUBCELLULAR LOCATION</scope>
</reference>
<organism>
    <name type="scientific">Human herpesvirus 1 (strain 17)</name>
    <name type="common">HHV-1</name>
    <name type="synonym">Human herpes simplex virus 1</name>
    <dbReference type="NCBI Taxonomy" id="10299"/>
    <lineage>
        <taxon>Viruses</taxon>
        <taxon>Duplodnaviria</taxon>
        <taxon>Heunggongvirae</taxon>
        <taxon>Peploviricota</taxon>
        <taxon>Herviviricetes</taxon>
        <taxon>Herpesvirales</taxon>
        <taxon>Orthoherpesviridae</taxon>
        <taxon>Alphaherpesvirinae</taxon>
        <taxon>Simplexvirus</taxon>
        <taxon>Simplexvirus humanalpha1</taxon>
        <taxon>Human herpesvirus 1</taxon>
    </lineage>
</organism>
<comment type="function">
    <text evidence="1 2 4">Component of the molecular motor that translocates viral genomic DNA in empty capsid during DNA packaging. Forms a tripartite terminase complex together with TRM1 and TRM3 in the host cytoplasm. Once the complex reaches the host nucleus, it interacts with the capsid portal vertex. This portal forms a ring in which genomic DNA is translocated into the capsid.</text>
</comment>
<comment type="subunit">
    <text evidence="1 3">Associates with TRM1 and TRM3 to form the tripartite terminase complex.</text>
</comment>
<comment type="interaction">
    <interactant intactId="EBI-7033000">
        <id>P10217</id>
    </interactant>
    <interactant intactId="EBI-7032948">
        <id>P10212</id>
        <label>TRM1</label>
    </interactant>
    <organismsDiffer>false</organismsDiffer>
    <experiments>6</experiments>
</comment>
<comment type="interaction">
    <interactant intactId="EBI-7033000">
        <id>P10217</id>
    </interactant>
    <interactant intactId="EBI-7032965">
        <id>P04295</id>
        <label>TRM3</label>
    </interactant>
    <organismsDiffer>false</organismsDiffer>
    <experiments>6</experiments>
</comment>
<comment type="subcellular location">
    <subcellularLocation>
        <location evidence="1 5">Host nucleus</location>
    </subcellularLocation>
    <text evidence="1">Found associated with the external surface of the viral capsid during assembly and DNA packaging, but seems absent in extracellular mature virions.</text>
</comment>
<comment type="similarity">
    <text evidence="1">Belongs to the herpesviridae TRM2 protein family.</text>
</comment>
<sequence>MAGREGRTRQRTLRDTIPDCALRSQTLESLDARYVSRDGAHDAAVWFEDMTPAELEVVFPTTDAKLNYLSRTQRLASLLTYAGPIKAPDDAAAPQTPDTACVHGELLAAKRERFAAVINRFLDLHQILRG</sequence>
<feature type="chain" id="PRO_0000116023" description="Tripartite terminase subunit 2">
    <location>
        <begin position="1"/>
        <end position="130"/>
    </location>
</feature>
<feature type="helix" evidence="6">
    <location>
        <begin position="17"/>
        <end position="20"/>
    </location>
</feature>
<feature type="helix" evidence="6">
    <location>
        <begin position="27"/>
        <end position="34"/>
    </location>
</feature>
<feature type="helix" evidence="6">
    <location>
        <begin position="53"/>
        <end position="56"/>
    </location>
</feature>
<feature type="helix" evidence="6">
    <location>
        <begin position="62"/>
        <end position="80"/>
    </location>
</feature>
<feature type="helix" evidence="6">
    <location>
        <begin position="102"/>
        <end position="127"/>
    </location>
</feature>